<evidence type="ECO:0000255" key="1">
    <source>
        <dbReference type="HAMAP-Rule" id="MF_00457"/>
    </source>
</evidence>
<name>Y3160_SYMTH</name>
<protein>
    <recommendedName>
        <fullName evidence="1">UPF0173 metal-dependent hydrolase STH3160</fullName>
    </recommendedName>
</protein>
<accession>Q67JK8</accession>
<comment type="similarity">
    <text evidence="1">Belongs to the UPF0173 family.</text>
</comment>
<sequence length="224" mass="24069">MQIRYLGHSAFEITDGKWNLLIDPFITGNPACPVKAEELHPQYILVTHLHDDHVGDTVAIAKRTGATVITSFEGGQALAAQGVKVADMALGGKRRFDFGLVRVTLAFHGFGPTGGHACGFVIHIGGKRIYHAGDTALFSDMKLLNGVIEEPGIDVAMLPIGDNYTMGPEDAAVAVEWIRPKVVIPMHWGTFPVLVQDASGFAARVRETGASQPVVLRPGETYTL</sequence>
<keyword id="KW-0378">Hydrolase</keyword>
<keyword id="KW-1185">Reference proteome</keyword>
<dbReference type="EMBL" id="AP006840">
    <property type="protein sequence ID" value="BAD42142.1"/>
    <property type="molecule type" value="Genomic_DNA"/>
</dbReference>
<dbReference type="RefSeq" id="WP_011197273.1">
    <property type="nucleotide sequence ID" value="NC_006177.1"/>
</dbReference>
<dbReference type="SMR" id="Q67JK8"/>
<dbReference type="STRING" id="292459.STH3160"/>
<dbReference type="KEGG" id="sth:STH3160"/>
<dbReference type="eggNOG" id="COG2220">
    <property type="taxonomic scope" value="Bacteria"/>
</dbReference>
<dbReference type="HOGENOM" id="CLU_070010_4_1_9"/>
<dbReference type="OrthoDB" id="9789133at2"/>
<dbReference type="Proteomes" id="UP000000417">
    <property type="component" value="Chromosome"/>
</dbReference>
<dbReference type="GO" id="GO:0016787">
    <property type="term" value="F:hydrolase activity"/>
    <property type="evidence" value="ECO:0007669"/>
    <property type="project" value="UniProtKB-UniRule"/>
</dbReference>
<dbReference type="Gene3D" id="3.60.15.10">
    <property type="entry name" value="Ribonuclease Z/Hydroxyacylglutathione hydrolase-like"/>
    <property type="match status" value="1"/>
</dbReference>
<dbReference type="HAMAP" id="MF_00457">
    <property type="entry name" value="UPF0173"/>
    <property type="match status" value="1"/>
</dbReference>
<dbReference type="InterPro" id="IPR001279">
    <property type="entry name" value="Metallo-B-lactamas"/>
</dbReference>
<dbReference type="InterPro" id="IPR036866">
    <property type="entry name" value="RibonucZ/Hydroxyglut_hydro"/>
</dbReference>
<dbReference type="InterPro" id="IPR022877">
    <property type="entry name" value="UPF0173"/>
</dbReference>
<dbReference type="InterPro" id="IPR050114">
    <property type="entry name" value="UPF0173_UPF0282_UlaG_hydrolase"/>
</dbReference>
<dbReference type="NCBIfam" id="NF001911">
    <property type="entry name" value="PRK00685.1"/>
    <property type="match status" value="1"/>
</dbReference>
<dbReference type="PANTHER" id="PTHR43546:SF3">
    <property type="entry name" value="UPF0173 METAL-DEPENDENT HYDROLASE MJ1163"/>
    <property type="match status" value="1"/>
</dbReference>
<dbReference type="PANTHER" id="PTHR43546">
    <property type="entry name" value="UPF0173 METAL-DEPENDENT HYDROLASE MJ1163-RELATED"/>
    <property type="match status" value="1"/>
</dbReference>
<dbReference type="Pfam" id="PF13483">
    <property type="entry name" value="Lactamase_B_3"/>
    <property type="match status" value="1"/>
</dbReference>
<dbReference type="SMART" id="SM00849">
    <property type="entry name" value="Lactamase_B"/>
    <property type="match status" value="1"/>
</dbReference>
<dbReference type="SUPFAM" id="SSF56281">
    <property type="entry name" value="Metallo-hydrolase/oxidoreductase"/>
    <property type="match status" value="1"/>
</dbReference>
<reference key="1">
    <citation type="journal article" date="2004" name="Nucleic Acids Res.">
        <title>Genome sequence of Symbiobacterium thermophilum, an uncultivable bacterium that depends on microbial commensalism.</title>
        <authorList>
            <person name="Ueda K."/>
            <person name="Yamashita A."/>
            <person name="Ishikawa J."/>
            <person name="Shimada M."/>
            <person name="Watsuji T."/>
            <person name="Morimura K."/>
            <person name="Ikeda H."/>
            <person name="Hattori M."/>
            <person name="Beppu T."/>
        </authorList>
    </citation>
    <scope>NUCLEOTIDE SEQUENCE [LARGE SCALE GENOMIC DNA]</scope>
    <source>
        <strain>DSM 24528 / JCM 14929 / IAM 14863 / T</strain>
    </source>
</reference>
<gene>
    <name type="ordered locus">STH3160</name>
</gene>
<proteinExistence type="inferred from homology"/>
<feature type="chain" id="PRO_0000367220" description="UPF0173 metal-dependent hydrolase STH3160">
    <location>
        <begin position="1"/>
        <end position="224"/>
    </location>
</feature>
<organism>
    <name type="scientific">Symbiobacterium thermophilum (strain DSM 24528 / JCM 14929 / IAM 14863 / T)</name>
    <dbReference type="NCBI Taxonomy" id="292459"/>
    <lineage>
        <taxon>Bacteria</taxon>
        <taxon>Bacillati</taxon>
        <taxon>Bacillota</taxon>
        <taxon>Clostridia</taxon>
        <taxon>Eubacteriales</taxon>
        <taxon>Symbiobacteriaceae</taxon>
        <taxon>Symbiobacterium</taxon>
    </lineage>
</organism>